<keyword id="KW-0963">Cytoplasm</keyword>
<keyword id="KW-0269">Exonuclease</keyword>
<keyword id="KW-0378">Hydrolase</keyword>
<keyword id="KW-0540">Nuclease</keyword>
<keyword id="KW-1185">Reference proteome</keyword>
<keyword id="KW-0694">RNA-binding</keyword>
<evidence type="ECO:0000255" key="1"/>
<evidence type="ECO:0000255" key="2">
    <source>
        <dbReference type="HAMAP-Rule" id="MF_01036"/>
    </source>
</evidence>
<reference key="1">
    <citation type="journal article" date="2010" name="BMC Genomics">
        <title>A genomic perspective on the potential of Actinobacillus succinogenes for industrial succinate production.</title>
        <authorList>
            <person name="McKinlay J.B."/>
            <person name="Laivenieks M."/>
            <person name="Schindler B.D."/>
            <person name="McKinlay A.A."/>
            <person name="Siddaramappa S."/>
            <person name="Challacombe J.F."/>
            <person name="Lowry S.R."/>
            <person name="Clum A."/>
            <person name="Lapidus A.L."/>
            <person name="Burkhart K.B."/>
            <person name="Harkins V."/>
            <person name="Vieille C."/>
        </authorList>
    </citation>
    <scope>NUCLEOTIDE SEQUENCE [LARGE SCALE GENOMIC DNA]</scope>
    <source>
        <strain>ATCC 55618 / DSM 22257 / CCUG 43843 / 130Z</strain>
    </source>
</reference>
<gene>
    <name evidence="2" type="primary">rnb</name>
    <name type="ordered locus">Asuc_1066</name>
</gene>
<comment type="function">
    <text evidence="2">Involved in mRNA degradation. Hydrolyzes single-stranded polyribonucleotides processively in the 3' to 5' direction.</text>
</comment>
<comment type="catalytic activity">
    <reaction evidence="2">
        <text>Exonucleolytic cleavage in the 3'- to 5'-direction to yield nucleoside 5'-phosphates.</text>
        <dbReference type="EC" id="3.1.13.1"/>
    </reaction>
</comment>
<comment type="subcellular location">
    <subcellularLocation>
        <location evidence="2">Cytoplasm</location>
    </subcellularLocation>
</comment>
<comment type="similarity">
    <text evidence="2">Belongs to the RNR ribonuclease family. RNase II subfamily.</text>
</comment>
<feature type="chain" id="PRO_1000072974" description="Exoribonuclease 2">
    <location>
        <begin position="1"/>
        <end position="659"/>
    </location>
</feature>
<feature type="domain" description="RNB" evidence="1">
    <location>
        <begin position="189"/>
        <end position="531"/>
    </location>
</feature>
<feature type="domain" description="S1 motif" evidence="2">
    <location>
        <begin position="576"/>
        <end position="658"/>
    </location>
</feature>
<protein>
    <recommendedName>
        <fullName evidence="2">Exoribonuclease 2</fullName>
        <ecNumber evidence="2">3.1.13.1</ecNumber>
    </recommendedName>
    <alternativeName>
        <fullName evidence="2">Exoribonuclease II</fullName>
        <shortName evidence="2">RNase II</shortName>
        <shortName evidence="2">Ribonuclease II</shortName>
    </alternativeName>
</protein>
<dbReference type="EC" id="3.1.13.1" evidence="2"/>
<dbReference type="EMBL" id="CP000746">
    <property type="protein sequence ID" value="ABR74432.1"/>
    <property type="molecule type" value="Genomic_DNA"/>
</dbReference>
<dbReference type="RefSeq" id="WP_012072809.1">
    <property type="nucleotide sequence ID" value="NC_009655.1"/>
</dbReference>
<dbReference type="SMR" id="A6VN85"/>
<dbReference type="STRING" id="339671.Asuc_1066"/>
<dbReference type="KEGG" id="asu:Asuc_1066"/>
<dbReference type="eggNOG" id="COG4776">
    <property type="taxonomic scope" value="Bacteria"/>
</dbReference>
<dbReference type="HOGENOM" id="CLU_002333_7_3_6"/>
<dbReference type="OrthoDB" id="9764149at2"/>
<dbReference type="Proteomes" id="UP000001114">
    <property type="component" value="Chromosome"/>
</dbReference>
<dbReference type="GO" id="GO:0005829">
    <property type="term" value="C:cytosol"/>
    <property type="evidence" value="ECO:0007669"/>
    <property type="project" value="TreeGrafter"/>
</dbReference>
<dbReference type="GO" id="GO:0008859">
    <property type="term" value="F:exoribonuclease II activity"/>
    <property type="evidence" value="ECO:0007669"/>
    <property type="project" value="UniProtKB-UniRule"/>
</dbReference>
<dbReference type="GO" id="GO:0003723">
    <property type="term" value="F:RNA binding"/>
    <property type="evidence" value="ECO:0007669"/>
    <property type="project" value="UniProtKB-KW"/>
</dbReference>
<dbReference type="GO" id="GO:0006402">
    <property type="term" value="P:mRNA catabolic process"/>
    <property type="evidence" value="ECO:0007669"/>
    <property type="project" value="UniProtKB-UniRule"/>
</dbReference>
<dbReference type="Gene3D" id="2.40.50.640">
    <property type="match status" value="1"/>
</dbReference>
<dbReference type="Gene3D" id="2.40.50.140">
    <property type="entry name" value="Nucleic acid-binding proteins"/>
    <property type="match status" value="2"/>
</dbReference>
<dbReference type="HAMAP" id="MF_01036">
    <property type="entry name" value="RNase_II"/>
    <property type="match status" value="1"/>
</dbReference>
<dbReference type="InterPro" id="IPR011129">
    <property type="entry name" value="CSD"/>
</dbReference>
<dbReference type="InterPro" id="IPR012340">
    <property type="entry name" value="NA-bd_OB-fold"/>
</dbReference>
<dbReference type="InterPro" id="IPR013223">
    <property type="entry name" value="RNase_B_OB_dom"/>
</dbReference>
<dbReference type="InterPro" id="IPR011804">
    <property type="entry name" value="RNase_II"/>
</dbReference>
<dbReference type="InterPro" id="IPR001900">
    <property type="entry name" value="RNase_II/R"/>
</dbReference>
<dbReference type="InterPro" id="IPR022966">
    <property type="entry name" value="RNase_II/R_CS"/>
</dbReference>
<dbReference type="InterPro" id="IPR004476">
    <property type="entry name" value="RNase_II/RNase_R"/>
</dbReference>
<dbReference type="InterPro" id="IPR050180">
    <property type="entry name" value="RNR_Ribonuclease"/>
</dbReference>
<dbReference type="InterPro" id="IPR003029">
    <property type="entry name" value="S1_domain"/>
</dbReference>
<dbReference type="NCBIfam" id="TIGR00358">
    <property type="entry name" value="3_prime_RNase"/>
    <property type="match status" value="1"/>
</dbReference>
<dbReference type="NCBIfam" id="NF003455">
    <property type="entry name" value="PRK05054.1"/>
    <property type="match status" value="1"/>
</dbReference>
<dbReference type="NCBIfam" id="TIGR02062">
    <property type="entry name" value="RNase_B"/>
    <property type="match status" value="1"/>
</dbReference>
<dbReference type="PANTHER" id="PTHR23355:SF37">
    <property type="entry name" value="EXORIBONUCLEASE 2"/>
    <property type="match status" value="1"/>
</dbReference>
<dbReference type="PANTHER" id="PTHR23355">
    <property type="entry name" value="RIBONUCLEASE"/>
    <property type="match status" value="1"/>
</dbReference>
<dbReference type="Pfam" id="PF08206">
    <property type="entry name" value="OB_RNB"/>
    <property type="match status" value="1"/>
</dbReference>
<dbReference type="Pfam" id="PF00773">
    <property type="entry name" value="RNB"/>
    <property type="match status" value="1"/>
</dbReference>
<dbReference type="Pfam" id="PF00575">
    <property type="entry name" value="S1"/>
    <property type="match status" value="1"/>
</dbReference>
<dbReference type="SMART" id="SM00357">
    <property type="entry name" value="CSP"/>
    <property type="match status" value="1"/>
</dbReference>
<dbReference type="SMART" id="SM00955">
    <property type="entry name" value="RNB"/>
    <property type="match status" value="1"/>
</dbReference>
<dbReference type="SMART" id="SM00316">
    <property type="entry name" value="S1"/>
    <property type="match status" value="1"/>
</dbReference>
<dbReference type="SUPFAM" id="SSF50249">
    <property type="entry name" value="Nucleic acid-binding proteins"/>
    <property type="match status" value="4"/>
</dbReference>
<dbReference type="PROSITE" id="PS01175">
    <property type="entry name" value="RIBONUCLEASE_II"/>
    <property type="match status" value="1"/>
</dbReference>
<organism>
    <name type="scientific">Actinobacillus succinogenes (strain ATCC 55618 / DSM 22257 / CCUG 43843 / 130Z)</name>
    <dbReference type="NCBI Taxonomy" id="339671"/>
    <lineage>
        <taxon>Bacteria</taxon>
        <taxon>Pseudomonadati</taxon>
        <taxon>Pseudomonadota</taxon>
        <taxon>Gammaproteobacteria</taxon>
        <taxon>Pasteurellales</taxon>
        <taxon>Pasteurellaceae</taxon>
        <taxon>Actinobacillus</taxon>
    </lineage>
</organism>
<sequence length="659" mass="75788">MFQNNPLLSQLKQQLHDSKPHVEGVVKGTDKAYGFLETDKETFFIAPPAMKKVMHGDKIKATIETIGDKKQADPEELIEPMLTRFIAKVRFNKDKKLQVLADHPNINQPIGAAQTKAVKEELHEGDWVVATLKTHPLRDDRFFYAQIVEFICRAEDEFAPWWVTLARHQQSRYPVQGQDSYKMLDPQTRKDLTALHFVTIDSESTQDMDDALYIEPLEQNGEQTGWKLTVAIADPTAYIAADSQIEKDARQRCFTNYLPGFNIPMLPRELSDELCSLMENETRAALVCRLQTDLQGELQGKPEFLLADVQSKAKLAYNRVSDYLEQAEGAWQPENETTKQQIHWLHRFALTRINWRKTHGLLFKEKPDYSFVLADNGHVQEIKAEYRRIANQIVEESMIVANICCAHYLADNAKTGIFNTHAGFDKKFLPNAHHFLMTNLSNAQNQDELTVRYSVENLATLEGYCRMRHDIEPIDGDYLEFRLRRFLTFAEFKSELAPHFGLGLTGYATWTSPIRKYSDMVNHRLIKACIAEQACLKPSDDILTRLQEARKQNRMVERDIADWLYCRYLADKVENKPEFQAEVQDCMRGGLRVQLLENGASVFVPASTIHPNKEEIQVNSDELAFYINGERRYKIGDIVNIQLTEVKEETRSLIGNLVL</sequence>
<proteinExistence type="inferred from homology"/>
<accession>A6VN85</accession>
<name>RNB_ACTSZ</name>